<feature type="chain" id="PRO_0000110647" description="UPF0358 protein lin1058">
    <location>
        <begin position="1"/>
        <end position="93"/>
    </location>
</feature>
<reference key="1">
    <citation type="journal article" date="2001" name="Science">
        <title>Comparative genomics of Listeria species.</title>
        <authorList>
            <person name="Glaser P."/>
            <person name="Frangeul L."/>
            <person name="Buchrieser C."/>
            <person name="Rusniok C."/>
            <person name="Amend A."/>
            <person name="Baquero F."/>
            <person name="Berche P."/>
            <person name="Bloecker H."/>
            <person name="Brandt P."/>
            <person name="Chakraborty T."/>
            <person name="Charbit A."/>
            <person name="Chetouani F."/>
            <person name="Couve E."/>
            <person name="de Daruvar A."/>
            <person name="Dehoux P."/>
            <person name="Domann E."/>
            <person name="Dominguez-Bernal G."/>
            <person name="Duchaud E."/>
            <person name="Durant L."/>
            <person name="Dussurget O."/>
            <person name="Entian K.-D."/>
            <person name="Fsihi H."/>
            <person name="Garcia-del Portillo F."/>
            <person name="Garrido P."/>
            <person name="Gautier L."/>
            <person name="Goebel W."/>
            <person name="Gomez-Lopez N."/>
            <person name="Hain T."/>
            <person name="Hauf J."/>
            <person name="Jackson D."/>
            <person name="Jones L.-M."/>
            <person name="Kaerst U."/>
            <person name="Kreft J."/>
            <person name="Kuhn M."/>
            <person name="Kunst F."/>
            <person name="Kurapkat G."/>
            <person name="Madueno E."/>
            <person name="Maitournam A."/>
            <person name="Mata Vicente J."/>
            <person name="Ng E."/>
            <person name="Nedjari H."/>
            <person name="Nordsiek G."/>
            <person name="Novella S."/>
            <person name="de Pablos B."/>
            <person name="Perez-Diaz J.-C."/>
            <person name="Purcell R."/>
            <person name="Remmel B."/>
            <person name="Rose M."/>
            <person name="Schlueter T."/>
            <person name="Simoes N."/>
            <person name="Tierrez A."/>
            <person name="Vazquez-Boland J.-A."/>
            <person name="Voss H."/>
            <person name="Wehland J."/>
            <person name="Cossart P."/>
        </authorList>
    </citation>
    <scope>NUCLEOTIDE SEQUENCE [LARGE SCALE GENOMIC DNA]</scope>
    <source>
        <strain>ATCC BAA-680 / CLIP 11262</strain>
    </source>
</reference>
<protein>
    <recommendedName>
        <fullName evidence="1">UPF0358 protein lin1058</fullName>
    </recommendedName>
</protein>
<comment type="similarity">
    <text evidence="1">Belongs to the UPF0358 family.</text>
</comment>
<evidence type="ECO:0000255" key="1">
    <source>
        <dbReference type="HAMAP-Rule" id="MF_01560"/>
    </source>
</evidence>
<proteinExistence type="inferred from homology"/>
<accession>Q92CW3</accession>
<sequence>MANKKIDHREEAIELLKQDAKRILQLIKVQMDNLTLPQCPAYEEVLDTQMYGLSREINFATRLGLIEPEEGKKLISTLEKELSALHELSMSKK</sequence>
<dbReference type="EMBL" id="AL596167">
    <property type="protein sequence ID" value="CAC96289.1"/>
    <property type="molecule type" value="Genomic_DNA"/>
</dbReference>
<dbReference type="PIR" id="AI1564">
    <property type="entry name" value="AI1564"/>
</dbReference>
<dbReference type="RefSeq" id="WP_003761623.1">
    <property type="nucleotide sequence ID" value="NC_003212.1"/>
</dbReference>
<dbReference type="SMR" id="Q92CW3"/>
<dbReference type="STRING" id="272626.gene:17565388"/>
<dbReference type="KEGG" id="lin:lin1058"/>
<dbReference type="eggNOG" id="COG4838">
    <property type="taxonomic scope" value="Bacteria"/>
</dbReference>
<dbReference type="HOGENOM" id="CLU_160493_1_0_9"/>
<dbReference type="OrthoDB" id="2135235at2"/>
<dbReference type="Proteomes" id="UP000002513">
    <property type="component" value="Chromosome"/>
</dbReference>
<dbReference type="Gene3D" id="1.10.287.750">
    <property type="entry name" value="SO2669-like"/>
    <property type="match status" value="1"/>
</dbReference>
<dbReference type="HAMAP" id="MF_01560">
    <property type="entry name" value="UPF0358"/>
    <property type="match status" value="1"/>
</dbReference>
<dbReference type="InterPro" id="IPR009983">
    <property type="entry name" value="UPF0358"/>
</dbReference>
<dbReference type="InterPro" id="IPR036270">
    <property type="entry name" value="UPF0358_sf"/>
</dbReference>
<dbReference type="NCBIfam" id="NF010187">
    <property type="entry name" value="PRK13666.1"/>
    <property type="match status" value="1"/>
</dbReference>
<dbReference type="Pfam" id="PF07408">
    <property type="entry name" value="DUF1507"/>
    <property type="match status" value="1"/>
</dbReference>
<dbReference type="SUPFAM" id="SSF140404">
    <property type="entry name" value="EF2458-like"/>
    <property type="match status" value="1"/>
</dbReference>
<gene>
    <name type="ordered locus">lin1058</name>
</gene>
<organism>
    <name type="scientific">Listeria innocua serovar 6a (strain ATCC BAA-680 / CLIP 11262)</name>
    <dbReference type="NCBI Taxonomy" id="272626"/>
    <lineage>
        <taxon>Bacteria</taxon>
        <taxon>Bacillati</taxon>
        <taxon>Bacillota</taxon>
        <taxon>Bacilli</taxon>
        <taxon>Bacillales</taxon>
        <taxon>Listeriaceae</taxon>
        <taxon>Listeria</taxon>
    </lineage>
</organism>
<name>Y1058_LISIN</name>